<accession>B1P1A7</accession>
<name>JZ47A_CHIGU</name>
<reference key="1">
    <citation type="journal article" date="2008" name="Cell. Mol. Life Sci.">
        <title>Molecular diversity and evolution of cystine knot toxins of the tarantula Chilobrachys jingzhao.</title>
        <authorList>
            <person name="Chen J."/>
            <person name="Deng M."/>
            <person name="He Q."/>
            <person name="Meng E."/>
            <person name="Jiang L."/>
            <person name="Liao Z."/>
            <person name="Rong M."/>
            <person name="Liang S."/>
        </authorList>
    </citation>
    <scope>NUCLEOTIDE SEQUENCE [LARGE SCALE MRNA]</scope>
    <source>
        <tissue>Venom gland</tissue>
    </source>
</reference>
<reference key="2">
    <citation type="journal article" date="2007" name="Proteomics">
        <title>Proteomic and peptidomic analysis of the venom from Chinese tarantula Chilobrachys jingzhao.</title>
        <authorList>
            <person name="Liao Z."/>
            <person name="Cao J."/>
            <person name="Li S."/>
            <person name="Yan X."/>
            <person name="Hu W."/>
            <person name="He Q."/>
            <person name="Chen J."/>
            <person name="Tang J."/>
            <person name="Xie J."/>
            <person name="Liang S."/>
        </authorList>
    </citation>
    <scope>PROTEIN SEQUENCE OF 49-87</scope>
    <scope>IDENTIFICATION BY MASS SPECTROMETRY</scope>
    <scope>SUBCELLULAR LOCATION</scope>
    <source>
        <tissue>Venom</tissue>
    </source>
</reference>
<dbReference type="EMBL" id="EU233838">
    <property type="protein sequence ID" value="ABY71657.1"/>
    <property type="molecule type" value="mRNA"/>
</dbReference>
<dbReference type="SMR" id="B1P1A7"/>
<dbReference type="ArachnoServer" id="AS000787">
    <property type="toxin name" value="U3-theraphotoxin-Cg1b"/>
</dbReference>
<dbReference type="GO" id="GO:0005576">
    <property type="term" value="C:extracellular region"/>
    <property type="evidence" value="ECO:0007669"/>
    <property type="project" value="UniProtKB-SubCell"/>
</dbReference>
<dbReference type="GO" id="GO:0099106">
    <property type="term" value="F:ion channel regulator activity"/>
    <property type="evidence" value="ECO:0007669"/>
    <property type="project" value="UniProtKB-KW"/>
</dbReference>
<dbReference type="GO" id="GO:0090729">
    <property type="term" value="F:toxin activity"/>
    <property type="evidence" value="ECO:0007669"/>
    <property type="project" value="UniProtKB-KW"/>
</dbReference>
<dbReference type="InterPro" id="IPR012625">
    <property type="entry name" value="Hwtx-2-like"/>
</dbReference>
<dbReference type="Pfam" id="PF08089">
    <property type="entry name" value="Toxin_20"/>
    <property type="match status" value="1"/>
</dbReference>
<dbReference type="SUPFAM" id="SSF57059">
    <property type="entry name" value="omega toxin-like"/>
    <property type="match status" value="1"/>
</dbReference>
<dbReference type="PROSITE" id="PS60022">
    <property type="entry name" value="HWTX_2"/>
    <property type="match status" value="1"/>
</dbReference>
<feature type="signal peptide" evidence="2">
    <location>
        <begin position="1"/>
        <end position="23"/>
    </location>
</feature>
<feature type="propeptide" id="PRO_0000398502" evidence="3">
    <location>
        <begin position="24"/>
        <end position="48"/>
    </location>
</feature>
<feature type="peptide" id="PRO_0000398503" description="U3-theraphotoxin-Cg1b" evidence="3">
    <location>
        <begin position="49"/>
        <end position="87"/>
    </location>
</feature>
<feature type="disulfide bond" evidence="1">
    <location>
        <begin position="52"/>
        <end position="65"/>
    </location>
</feature>
<feature type="disulfide bond" evidence="1">
    <location>
        <begin position="56"/>
        <end position="79"/>
    </location>
</feature>
<feature type="disulfide bond" evidence="1">
    <location>
        <begin position="73"/>
        <end position="84"/>
    </location>
</feature>
<evidence type="ECO:0000250" key="1">
    <source>
        <dbReference type="UniProtKB" id="P85504"/>
    </source>
</evidence>
<evidence type="ECO:0000255" key="2"/>
<evidence type="ECO:0000269" key="3">
    <source>
    </source>
</evidence>
<evidence type="ECO:0000303" key="4">
    <source>
    </source>
</evidence>
<evidence type="ECO:0000305" key="5"/>
<evidence type="ECO:0000305" key="6">
    <source>
    </source>
</evidence>
<evidence type="ECO:0000312" key="7">
    <source>
        <dbReference type="EMBL" id="ABY71657.1"/>
    </source>
</evidence>
<comment type="function">
    <text evidence="5">Probable ion channel inhibitor.</text>
</comment>
<comment type="subcellular location">
    <subcellularLocation>
        <location evidence="3">Secreted</location>
    </subcellularLocation>
</comment>
<comment type="tissue specificity">
    <text evidence="6">Expressed by the venom gland.</text>
</comment>
<comment type="similarity">
    <text evidence="5">Belongs to the neurotoxin 12 (Hwtx-2) family. 03 (juruin) subfamily.</text>
</comment>
<protein>
    <recommendedName>
        <fullName evidence="5">U3-theraphotoxin-Cg1b</fullName>
        <shortName evidence="5">U3-TRTX-Cg1b</shortName>
    </recommendedName>
    <alternativeName>
        <fullName evidence="5">Jingzhaotoxin-47</fullName>
        <shortName evidence="7">JZTX-47</shortName>
    </alternativeName>
    <alternativeName>
        <fullName evidence="4">Peptide F6-10.40</fullName>
    </alternativeName>
</protein>
<sequence>MRTFTLIAILTCAVLVIFHVSAAEELEAQDVIQPEDIFTGVATLEEDRIFECSFSCDIKKNGKPCKGAGEKKCSGGWRCKMNFCVKF</sequence>
<keyword id="KW-0903">Direct protein sequencing</keyword>
<keyword id="KW-1015">Disulfide bond</keyword>
<keyword id="KW-0872">Ion channel impairing toxin</keyword>
<keyword id="KW-0960">Knottin</keyword>
<keyword id="KW-0964">Secreted</keyword>
<keyword id="KW-0732">Signal</keyword>
<keyword id="KW-0800">Toxin</keyword>
<proteinExistence type="evidence at protein level"/>
<organism>
    <name type="scientific">Chilobrachys guangxiensis</name>
    <name type="common">Chinese earth tiger tarantula</name>
    <name type="synonym">Chilobrachys jingzhao</name>
    <dbReference type="NCBI Taxonomy" id="278060"/>
    <lineage>
        <taxon>Eukaryota</taxon>
        <taxon>Metazoa</taxon>
        <taxon>Ecdysozoa</taxon>
        <taxon>Arthropoda</taxon>
        <taxon>Chelicerata</taxon>
        <taxon>Arachnida</taxon>
        <taxon>Araneae</taxon>
        <taxon>Mygalomorphae</taxon>
        <taxon>Theraphosidae</taxon>
        <taxon>Chilobrachys</taxon>
    </lineage>
</organism>